<accession>A8GCL5</accession>
<comment type="function">
    <text evidence="1">Necessary for the introduction of cis unsaturation into fatty acids. Catalyzes the dehydration of (3R)-3-hydroxydecanoyl-ACP to E-(2)-decenoyl-ACP and then its isomerization to Z-(3)-decenoyl-ACP. Can catalyze the dehydratase reaction for beta-hydroxyacyl-ACPs with saturated chain lengths up to 16:0, being most active on intermediate chain length.</text>
</comment>
<comment type="catalytic activity">
    <reaction evidence="1">
        <text>a (3R)-hydroxyacyl-[ACP] = a (2E)-enoyl-[ACP] + H2O</text>
        <dbReference type="Rhea" id="RHEA:13097"/>
        <dbReference type="Rhea" id="RHEA-COMP:9925"/>
        <dbReference type="Rhea" id="RHEA-COMP:9945"/>
        <dbReference type="ChEBI" id="CHEBI:15377"/>
        <dbReference type="ChEBI" id="CHEBI:78784"/>
        <dbReference type="ChEBI" id="CHEBI:78827"/>
        <dbReference type="EC" id="4.2.1.59"/>
    </reaction>
</comment>
<comment type="catalytic activity">
    <reaction evidence="1">
        <text>(3R)-hydroxydecanoyl-[ACP] = (2E)-decenoyl-[ACP] + H2O</text>
        <dbReference type="Rhea" id="RHEA:41860"/>
        <dbReference type="Rhea" id="RHEA-COMP:9638"/>
        <dbReference type="Rhea" id="RHEA-COMP:9639"/>
        <dbReference type="ChEBI" id="CHEBI:15377"/>
        <dbReference type="ChEBI" id="CHEBI:78466"/>
        <dbReference type="ChEBI" id="CHEBI:78467"/>
    </reaction>
</comment>
<comment type="catalytic activity">
    <reaction evidence="1">
        <text>(2E)-decenoyl-[ACP] = (3Z)-decenoyl-[ACP]</text>
        <dbReference type="Rhea" id="RHEA:23568"/>
        <dbReference type="Rhea" id="RHEA-COMP:9639"/>
        <dbReference type="Rhea" id="RHEA-COMP:9927"/>
        <dbReference type="ChEBI" id="CHEBI:78467"/>
        <dbReference type="ChEBI" id="CHEBI:78798"/>
        <dbReference type="EC" id="5.3.3.14"/>
    </reaction>
</comment>
<comment type="pathway">
    <text evidence="1">Lipid metabolism; fatty acid biosynthesis.</text>
</comment>
<comment type="subunit">
    <text evidence="1">Homodimer.</text>
</comment>
<comment type="subcellular location">
    <subcellularLocation>
        <location evidence="1">Cytoplasm</location>
    </subcellularLocation>
</comment>
<comment type="similarity">
    <text evidence="1">Belongs to the thioester dehydratase family. FabA subfamily.</text>
</comment>
<proteinExistence type="inferred from homology"/>
<feature type="chain" id="PRO_1000060824" description="3-hydroxydecanoyl-[acyl-carrier-protein] dehydratase">
    <location>
        <begin position="1"/>
        <end position="172"/>
    </location>
</feature>
<feature type="active site" evidence="1">
    <location>
        <position position="71"/>
    </location>
</feature>
<sequence>MVEKRDSYTKEDLEASGRGELFGAGGPPLPAGNMLMMDRVVKMTEDGGTHNKGYVEAELDINPDLWFFGCHFIGDPVMPGCLGLDAMWQLVGFYLGWLGGEGKGRALGVGEVKFTGQVLPTAKKVTYRINFKRVIIRKLIMGVADGEVLVDGQVIYTASDLKVGLFKDTAAF</sequence>
<keyword id="KW-0963">Cytoplasm</keyword>
<keyword id="KW-0275">Fatty acid biosynthesis</keyword>
<keyword id="KW-0276">Fatty acid metabolism</keyword>
<keyword id="KW-0413">Isomerase</keyword>
<keyword id="KW-0444">Lipid biosynthesis</keyword>
<keyword id="KW-0443">Lipid metabolism</keyword>
<keyword id="KW-0456">Lyase</keyword>
<name>FABA_SERP5</name>
<reference key="1">
    <citation type="submission" date="2007-09" db="EMBL/GenBank/DDBJ databases">
        <title>Complete sequence of chromosome of Serratia proteamaculans 568.</title>
        <authorList>
            <consortium name="US DOE Joint Genome Institute"/>
            <person name="Copeland A."/>
            <person name="Lucas S."/>
            <person name="Lapidus A."/>
            <person name="Barry K."/>
            <person name="Glavina del Rio T."/>
            <person name="Dalin E."/>
            <person name="Tice H."/>
            <person name="Pitluck S."/>
            <person name="Chain P."/>
            <person name="Malfatti S."/>
            <person name="Shin M."/>
            <person name="Vergez L."/>
            <person name="Schmutz J."/>
            <person name="Larimer F."/>
            <person name="Land M."/>
            <person name="Hauser L."/>
            <person name="Kyrpides N."/>
            <person name="Kim E."/>
            <person name="Taghavi S."/>
            <person name="Newman L."/>
            <person name="Vangronsveld J."/>
            <person name="van der Lelie D."/>
            <person name="Richardson P."/>
        </authorList>
    </citation>
    <scope>NUCLEOTIDE SEQUENCE [LARGE SCALE GENOMIC DNA]</scope>
    <source>
        <strain>568</strain>
    </source>
</reference>
<dbReference type="EC" id="4.2.1.59" evidence="1"/>
<dbReference type="EC" id="5.3.3.14" evidence="1"/>
<dbReference type="EMBL" id="CP000826">
    <property type="protein sequence ID" value="ABV40855.1"/>
    <property type="molecule type" value="Genomic_DNA"/>
</dbReference>
<dbReference type="SMR" id="A8GCL5"/>
<dbReference type="STRING" id="399741.Spro_1751"/>
<dbReference type="KEGG" id="spe:Spro_1751"/>
<dbReference type="eggNOG" id="COG0764">
    <property type="taxonomic scope" value="Bacteria"/>
</dbReference>
<dbReference type="HOGENOM" id="CLU_097925_0_0_6"/>
<dbReference type="OrthoDB" id="9786735at2"/>
<dbReference type="UniPathway" id="UPA00094"/>
<dbReference type="GO" id="GO:0005737">
    <property type="term" value="C:cytoplasm"/>
    <property type="evidence" value="ECO:0007669"/>
    <property type="project" value="UniProtKB-SubCell"/>
</dbReference>
<dbReference type="GO" id="GO:0019171">
    <property type="term" value="F:(3R)-hydroxyacyl-[acyl-carrier-protein] dehydratase activity"/>
    <property type="evidence" value="ECO:0007669"/>
    <property type="project" value="UniProtKB-UniRule"/>
</dbReference>
<dbReference type="GO" id="GO:0034017">
    <property type="term" value="F:trans-2-decenoyl-acyl-carrier-protein isomerase activity"/>
    <property type="evidence" value="ECO:0007669"/>
    <property type="project" value="UniProtKB-UniRule"/>
</dbReference>
<dbReference type="GO" id="GO:0006636">
    <property type="term" value="P:unsaturated fatty acid biosynthetic process"/>
    <property type="evidence" value="ECO:0007669"/>
    <property type="project" value="UniProtKB-UniRule"/>
</dbReference>
<dbReference type="CDD" id="cd01287">
    <property type="entry name" value="FabA"/>
    <property type="match status" value="1"/>
</dbReference>
<dbReference type="FunFam" id="3.10.129.10:FF:000003">
    <property type="entry name" value="3-hydroxydecanoyl-[acyl-carrier-protein] dehydratase"/>
    <property type="match status" value="1"/>
</dbReference>
<dbReference type="Gene3D" id="3.10.129.10">
    <property type="entry name" value="Hotdog Thioesterase"/>
    <property type="match status" value="1"/>
</dbReference>
<dbReference type="HAMAP" id="MF_00405">
    <property type="entry name" value="FabA"/>
    <property type="match status" value="1"/>
</dbReference>
<dbReference type="InterPro" id="IPR010083">
    <property type="entry name" value="FabA"/>
</dbReference>
<dbReference type="InterPro" id="IPR013114">
    <property type="entry name" value="FabA_FabZ"/>
</dbReference>
<dbReference type="InterPro" id="IPR029069">
    <property type="entry name" value="HotDog_dom_sf"/>
</dbReference>
<dbReference type="NCBIfam" id="TIGR01749">
    <property type="entry name" value="fabA"/>
    <property type="match status" value="1"/>
</dbReference>
<dbReference type="NCBIfam" id="NF003509">
    <property type="entry name" value="PRK05174.1"/>
    <property type="match status" value="1"/>
</dbReference>
<dbReference type="PANTHER" id="PTHR30272">
    <property type="entry name" value="3-HYDROXYACYL-[ACYL-CARRIER-PROTEIN] DEHYDRATASE"/>
    <property type="match status" value="1"/>
</dbReference>
<dbReference type="PANTHER" id="PTHR30272:SF8">
    <property type="entry name" value="3-HYDROXYDECANOYL-[ACYL-CARRIER-PROTEIN] DEHYDRATASE"/>
    <property type="match status" value="1"/>
</dbReference>
<dbReference type="Pfam" id="PF07977">
    <property type="entry name" value="FabA"/>
    <property type="match status" value="1"/>
</dbReference>
<dbReference type="SUPFAM" id="SSF54637">
    <property type="entry name" value="Thioesterase/thiol ester dehydrase-isomerase"/>
    <property type="match status" value="1"/>
</dbReference>
<organism>
    <name type="scientific">Serratia proteamaculans (strain 568)</name>
    <dbReference type="NCBI Taxonomy" id="399741"/>
    <lineage>
        <taxon>Bacteria</taxon>
        <taxon>Pseudomonadati</taxon>
        <taxon>Pseudomonadota</taxon>
        <taxon>Gammaproteobacteria</taxon>
        <taxon>Enterobacterales</taxon>
        <taxon>Yersiniaceae</taxon>
        <taxon>Serratia</taxon>
    </lineage>
</organism>
<evidence type="ECO:0000255" key="1">
    <source>
        <dbReference type="HAMAP-Rule" id="MF_00405"/>
    </source>
</evidence>
<protein>
    <recommendedName>
        <fullName evidence="1">3-hydroxydecanoyl-[acyl-carrier-protein] dehydratase</fullName>
        <ecNumber evidence="1">4.2.1.59</ecNumber>
    </recommendedName>
    <alternativeName>
        <fullName evidence="1">3-hydroxyacyl-[acyl-carrier-protein] dehydratase FabA</fullName>
    </alternativeName>
    <alternativeName>
        <fullName evidence="1">Beta-hydroxydecanoyl thioester dehydrase</fullName>
    </alternativeName>
    <alternativeName>
        <fullName evidence="1">Trans-2-decenoyl-[acyl-carrier-protein] isomerase</fullName>
        <ecNumber evidence="1">5.3.3.14</ecNumber>
    </alternativeName>
</protein>
<gene>
    <name evidence="1" type="primary">fabA</name>
    <name type="ordered locus">Spro_1751</name>
</gene>